<proteinExistence type="inferred from homology"/>
<dbReference type="EMBL" id="AE017321">
    <property type="protein sequence ID" value="AAW70721.1"/>
    <property type="molecule type" value="Genomic_DNA"/>
</dbReference>
<dbReference type="RefSeq" id="WP_011256331.1">
    <property type="nucleotide sequence ID" value="NC_006833.1"/>
</dbReference>
<dbReference type="SMR" id="Q5GTF3"/>
<dbReference type="STRING" id="292805.Wbm0130"/>
<dbReference type="KEGG" id="wbm:Wbm0130"/>
<dbReference type="eggNOG" id="COG0806">
    <property type="taxonomic scope" value="Bacteria"/>
</dbReference>
<dbReference type="HOGENOM" id="CLU_077636_0_1_5"/>
<dbReference type="Proteomes" id="UP000000534">
    <property type="component" value="Chromosome"/>
</dbReference>
<dbReference type="GO" id="GO:0005737">
    <property type="term" value="C:cytoplasm"/>
    <property type="evidence" value="ECO:0007669"/>
    <property type="project" value="UniProtKB-SubCell"/>
</dbReference>
<dbReference type="GO" id="GO:0005840">
    <property type="term" value="C:ribosome"/>
    <property type="evidence" value="ECO:0007669"/>
    <property type="project" value="InterPro"/>
</dbReference>
<dbReference type="GO" id="GO:0043022">
    <property type="term" value="F:ribosome binding"/>
    <property type="evidence" value="ECO:0007669"/>
    <property type="project" value="InterPro"/>
</dbReference>
<dbReference type="GO" id="GO:0042274">
    <property type="term" value="P:ribosomal small subunit biogenesis"/>
    <property type="evidence" value="ECO:0007669"/>
    <property type="project" value="UniProtKB-UniRule"/>
</dbReference>
<dbReference type="GO" id="GO:0006364">
    <property type="term" value="P:rRNA processing"/>
    <property type="evidence" value="ECO:0007669"/>
    <property type="project" value="UniProtKB-UniRule"/>
</dbReference>
<dbReference type="Gene3D" id="2.30.30.240">
    <property type="entry name" value="PRC-barrel domain"/>
    <property type="match status" value="1"/>
</dbReference>
<dbReference type="Gene3D" id="2.40.30.60">
    <property type="entry name" value="RimM"/>
    <property type="match status" value="1"/>
</dbReference>
<dbReference type="HAMAP" id="MF_00014">
    <property type="entry name" value="Ribosome_mat_RimM"/>
    <property type="match status" value="1"/>
</dbReference>
<dbReference type="InterPro" id="IPR011033">
    <property type="entry name" value="PRC_barrel-like_sf"/>
</dbReference>
<dbReference type="InterPro" id="IPR056792">
    <property type="entry name" value="PRC_RimM"/>
</dbReference>
<dbReference type="InterPro" id="IPR011961">
    <property type="entry name" value="RimM"/>
</dbReference>
<dbReference type="InterPro" id="IPR002676">
    <property type="entry name" value="RimM_N"/>
</dbReference>
<dbReference type="InterPro" id="IPR036976">
    <property type="entry name" value="RimM_N_sf"/>
</dbReference>
<dbReference type="InterPro" id="IPR009000">
    <property type="entry name" value="Transl_B-barrel_sf"/>
</dbReference>
<dbReference type="NCBIfam" id="TIGR02273">
    <property type="entry name" value="16S_RimM"/>
    <property type="match status" value="1"/>
</dbReference>
<dbReference type="NCBIfam" id="NF011186">
    <property type="entry name" value="PRK14592.1"/>
    <property type="match status" value="1"/>
</dbReference>
<dbReference type="PANTHER" id="PTHR33692">
    <property type="entry name" value="RIBOSOME MATURATION FACTOR RIMM"/>
    <property type="match status" value="1"/>
</dbReference>
<dbReference type="PANTHER" id="PTHR33692:SF1">
    <property type="entry name" value="RIBOSOME MATURATION FACTOR RIMM"/>
    <property type="match status" value="1"/>
</dbReference>
<dbReference type="Pfam" id="PF24986">
    <property type="entry name" value="PRC_RimM"/>
    <property type="match status" value="1"/>
</dbReference>
<dbReference type="Pfam" id="PF01782">
    <property type="entry name" value="RimM"/>
    <property type="match status" value="1"/>
</dbReference>
<dbReference type="SUPFAM" id="SSF50346">
    <property type="entry name" value="PRC-barrel domain"/>
    <property type="match status" value="1"/>
</dbReference>
<dbReference type="SUPFAM" id="SSF50447">
    <property type="entry name" value="Translation proteins"/>
    <property type="match status" value="1"/>
</dbReference>
<name>RIMM_WOLTR</name>
<gene>
    <name evidence="1" type="primary">rimM</name>
    <name type="ordered locus">Wbm0130</name>
</gene>
<comment type="function">
    <text evidence="1">An accessory protein needed during the final step in the assembly of 30S ribosomal subunit, possibly for assembly of the head region. Essential for efficient processing of 16S rRNA. May be needed both before and after RbfA during the maturation of 16S rRNA. It has affinity for free ribosomal 30S subunits but not for 70S ribosomes.</text>
</comment>
<comment type="subunit">
    <text evidence="1">Binds ribosomal protein uS19.</text>
</comment>
<comment type="subcellular location">
    <subcellularLocation>
        <location evidence="1">Cytoplasm</location>
    </subcellularLocation>
</comment>
<comment type="domain">
    <text evidence="1">The PRC barrel domain binds ribosomal protein uS19.</text>
</comment>
<comment type="similarity">
    <text evidence="1">Belongs to the RimM family.</text>
</comment>
<protein>
    <recommendedName>
        <fullName evidence="1">Ribosome maturation factor RimM</fullName>
    </recommendedName>
</protein>
<organism>
    <name type="scientific">Wolbachia sp. subsp. Brugia malayi (strain TRS)</name>
    <dbReference type="NCBI Taxonomy" id="292805"/>
    <lineage>
        <taxon>Bacteria</taxon>
        <taxon>Pseudomonadati</taxon>
        <taxon>Pseudomonadota</taxon>
        <taxon>Alphaproteobacteria</taxon>
        <taxon>Rickettsiales</taxon>
        <taxon>Anaplasmataceae</taxon>
        <taxon>Wolbachieae</taxon>
        <taxon>Wolbachia</taxon>
    </lineage>
</organism>
<sequence>MKDNLVCMGIITSPHGIKGAVKVKIFTEKPENISLYGKLISGSKNYDIDSVSVIGENLVIATINGVNSRNEAEFLRNKKLYVERNKLLKLNDENEFYQSDLVNMEIRLENDELYGYIKSIYNFGSGDILEISVISTKKNIMLPFTKEIFPYVNIKERYITLNMPEFIG</sequence>
<reference key="1">
    <citation type="journal article" date="2005" name="PLoS Biol.">
        <title>The Wolbachia genome of Brugia malayi: endosymbiont evolution within a human pathogenic nematode.</title>
        <authorList>
            <person name="Foster J."/>
            <person name="Ganatra M."/>
            <person name="Kamal I."/>
            <person name="Ware J."/>
            <person name="Makarova K."/>
            <person name="Ivanova N."/>
            <person name="Bhattacharyya A."/>
            <person name="Kapatral V."/>
            <person name="Kumar S."/>
            <person name="Posfai J."/>
            <person name="Vincze T."/>
            <person name="Ingram J."/>
            <person name="Moran L."/>
            <person name="Lapidus A."/>
            <person name="Omelchenko M."/>
            <person name="Kyrpides N."/>
            <person name="Ghedin E."/>
            <person name="Wang S."/>
            <person name="Goltsman E."/>
            <person name="Joukov V."/>
            <person name="Ostrovskaya O."/>
            <person name="Tsukerman K."/>
            <person name="Mazur M."/>
            <person name="Comb D."/>
            <person name="Koonin E."/>
            <person name="Slatko B."/>
        </authorList>
    </citation>
    <scope>NUCLEOTIDE SEQUENCE [LARGE SCALE GENOMIC DNA]</scope>
    <source>
        <strain>TRS</strain>
    </source>
</reference>
<keyword id="KW-0143">Chaperone</keyword>
<keyword id="KW-0963">Cytoplasm</keyword>
<keyword id="KW-1185">Reference proteome</keyword>
<keyword id="KW-0690">Ribosome biogenesis</keyword>
<keyword id="KW-0698">rRNA processing</keyword>
<feature type="chain" id="PRO_0000163389" description="Ribosome maturation factor RimM">
    <location>
        <begin position="1"/>
        <end position="168"/>
    </location>
</feature>
<feature type="domain" description="PRC barrel" evidence="1">
    <location>
        <begin position="93"/>
        <end position="167"/>
    </location>
</feature>
<accession>Q5GTF3</accession>
<evidence type="ECO:0000255" key="1">
    <source>
        <dbReference type="HAMAP-Rule" id="MF_00014"/>
    </source>
</evidence>